<gene>
    <name evidence="1" type="primary">proA</name>
    <name type="ordered locus">Msil_3276</name>
</gene>
<proteinExistence type="inferred from homology"/>
<name>PROA_METSB</name>
<accession>B8EQH0</accession>
<feature type="chain" id="PRO_1000193625" description="Gamma-glutamyl phosphate reductase">
    <location>
        <begin position="1"/>
        <end position="429"/>
    </location>
</feature>
<organism>
    <name type="scientific">Methylocella silvestris (strain DSM 15510 / CIP 108128 / LMG 27833 / NCIMB 13906 / BL2)</name>
    <dbReference type="NCBI Taxonomy" id="395965"/>
    <lineage>
        <taxon>Bacteria</taxon>
        <taxon>Pseudomonadati</taxon>
        <taxon>Pseudomonadota</taxon>
        <taxon>Alphaproteobacteria</taxon>
        <taxon>Hyphomicrobiales</taxon>
        <taxon>Beijerinckiaceae</taxon>
        <taxon>Methylocella</taxon>
    </lineage>
</organism>
<dbReference type="EC" id="1.2.1.41" evidence="1"/>
<dbReference type="EMBL" id="CP001280">
    <property type="protein sequence ID" value="ACK52183.1"/>
    <property type="molecule type" value="Genomic_DNA"/>
</dbReference>
<dbReference type="RefSeq" id="WP_012592252.1">
    <property type="nucleotide sequence ID" value="NC_011666.1"/>
</dbReference>
<dbReference type="SMR" id="B8EQH0"/>
<dbReference type="STRING" id="395965.Msil_3276"/>
<dbReference type="KEGG" id="msl:Msil_3276"/>
<dbReference type="eggNOG" id="COG0014">
    <property type="taxonomic scope" value="Bacteria"/>
</dbReference>
<dbReference type="HOGENOM" id="CLU_030231_0_0_5"/>
<dbReference type="OrthoDB" id="9809970at2"/>
<dbReference type="UniPathway" id="UPA00098">
    <property type="reaction ID" value="UER00360"/>
</dbReference>
<dbReference type="Proteomes" id="UP000002257">
    <property type="component" value="Chromosome"/>
</dbReference>
<dbReference type="GO" id="GO:0005737">
    <property type="term" value="C:cytoplasm"/>
    <property type="evidence" value="ECO:0007669"/>
    <property type="project" value="UniProtKB-SubCell"/>
</dbReference>
<dbReference type="GO" id="GO:0004350">
    <property type="term" value="F:glutamate-5-semialdehyde dehydrogenase activity"/>
    <property type="evidence" value="ECO:0007669"/>
    <property type="project" value="UniProtKB-UniRule"/>
</dbReference>
<dbReference type="GO" id="GO:0050661">
    <property type="term" value="F:NADP binding"/>
    <property type="evidence" value="ECO:0007669"/>
    <property type="project" value="InterPro"/>
</dbReference>
<dbReference type="GO" id="GO:0055129">
    <property type="term" value="P:L-proline biosynthetic process"/>
    <property type="evidence" value="ECO:0007669"/>
    <property type="project" value="UniProtKB-UniRule"/>
</dbReference>
<dbReference type="CDD" id="cd07079">
    <property type="entry name" value="ALDH_F18-19_ProA-GPR"/>
    <property type="match status" value="1"/>
</dbReference>
<dbReference type="FunFam" id="3.40.309.10:FF:000006">
    <property type="entry name" value="Gamma-glutamyl phosphate reductase"/>
    <property type="match status" value="1"/>
</dbReference>
<dbReference type="Gene3D" id="3.40.605.10">
    <property type="entry name" value="Aldehyde Dehydrogenase, Chain A, domain 1"/>
    <property type="match status" value="1"/>
</dbReference>
<dbReference type="Gene3D" id="3.40.309.10">
    <property type="entry name" value="Aldehyde Dehydrogenase, Chain A, domain 2"/>
    <property type="match status" value="1"/>
</dbReference>
<dbReference type="HAMAP" id="MF_00412">
    <property type="entry name" value="ProA"/>
    <property type="match status" value="1"/>
</dbReference>
<dbReference type="InterPro" id="IPR016161">
    <property type="entry name" value="Ald_DH/histidinol_DH"/>
</dbReference>
<dbReference type="InterPro" id="IPR016163">
    <property type="entry name" value="Ald_DH_C"/>
</dbReference>
<dbReference type="InterPro" id="IPR016162">
    <property type="entry name" value="Ald_DH_N"/>
</dbReference>
<dbReference type="InterPro" id="IPR015590">
    <property type="entry name" value="Aldehyde_DH_dom"/>
</dbReference>
<dbReference type="InterPro" id="IPR020593">
    <property type="entry name" value="G-glutamylP_reductase_CS"/>
</dbReference>
<dbReference type="InterPro" id="IPR012134">
    <property type="entry name" value="Glu-5-SA_DH"/>
</dbReference>
<dbReference type="InterPro" id="IPR000965">
    <property type="entry name" value="GPR_dom"/>
</dbReference>
<dbReference type="NCBIfam" id="NF001221">
    <property type="entry name" value="PRK00197.1"/>
    <property type="match status" value="1"/>
</dbReference>
<dbReference type="NCBIfam" id="TIGR00407">
    <property type="entry name" value="proA"/>
    <property type="match status" value="1"/>
</dbReference>
<dbReference type="PANTHER" id="PTHR11063:SF8">
    <property type="entry name" value="DELTA-1-PYRROLINE-5-CARBOXYLATE SYNTHASE"/>
    <property type="match status" value="1"/>
</dbReference>
<dbReference type="PANTHER" id="PTHR11063">
    <property type="entry name" value="GLUTAMATE SEMIALDEHYDE DEHYDROGENASE"/>
    <property type="match status" value="1"/>
</dbReference>
<dbReference type="Pfam" id="PF00171">
    <property type="entry name" value="Aldedh"/>
    <property type="match status" value="1"/>
</dbReference>
<dbReference type="PIRSF" id="PIRSF000151">
    <property type="entry name" value="GPR"/>
    <property type="match status" value="1"/>
</dbReference>
<dbReference type="SUPFAM" id="SSF53720">
    <property type="entry name" value="ALDH-like"/>
    <property type="match status" value="1"/>
</dbReference>
<dbReference type="PROSITE" id="PS01223">
    <property type="entry name" value="PROA"/>
    <property type="match status" value="1"/>
</dbReference>
<evidence type="ECO:0000255" key="1">
    <source>
        <dbReference type="HAMAP-Rule" id="MF_00412"/>
    </source>
</evidence>
<sequence length="429" mass="44388">MDNLNRVASGPDVRTLMAEIGREARKAARTLSLASTETKNSALLAAAAAIRTKAGAIAAANAQDYAAAQAKGVAGSFLDRLKLDPSRIEAMARGIAEVAALPDPVGRVLARFERPNGLVIERVAVPLGVIGIIYESRPAVTADAGALCLKAGNAAILRGGSESLRSAALIHDCLVAGLLEAGLPAAAISRVPIADRAAVGEMLSGLNGDIDVIVPRGGKSLVARVQNEARVPVFAHLEGVVHIYIDRAADLAKATKILLNAKLRRTGVCGAAETLLVDRACAATHLAPLVKTLLDAGCAVRGDAAALEADPRVSPASEADWSAEYLDAIISVRLVDGIDGAIAHIEAYGSHHTDCIVTEDPAAADRFLAEVDSAIVMHNASTQFADGGEFGFGGEIGIATGRMHARGPVGVEQLTTFKYRVHGDGQIRP</sequence>
<protein>
    <recommendedName>
        <fullName evidence="1">Gamma-glutamyl phosphate reductase</fullName>
        <shortName evidence="1">GPR</shortName>
        <ecNumber evidence="1">1.2.1.41</ecNumber>
    </recommendedName>
    <alternativeName>
        <fullName evidence="1">Glutamate-5-semialdehyde dehydrogenase</fullName>
    </alternativeName>
    <alternativeName>
        <fullName evidence="1">Glutamyl-gamma-semialdehyde dehydrogenase</fullName>
        <shortName evidence="1">GSA dehydrogenase</shortName>
    </alternativeName>
</protein>
<comment type="function">
    <text evidence="1">Catalyzes the NADPH-dependent reduction of L-glutamate 5-phosphate into L-glutamate 5-semialdehyde and phosphate. The product spontaneously undergoes cyclization to form 1-pyrroline-5-carboxylate.</text>
</comment>
<comment type="catalytic activity">
    <reaction evidence="1">
        <text>L-glutamate 5-semialdehyde + phosphate + NADP(+) = L-glutamyl 5-phosphate + NADPH + H(+)</text>
        <dbReference type="Rhea" id="RHEA:19541"/>
        <dbReference type="ChEBI" id="CHEBI:15378"/>
        <dbReference type="ChEBI" id="CHEBI:43474"/>
        <dbReference type="ChEBI" id="CHEBI:57783"/>
        <dbReference type="ChEBI" id="CHEBI:58066"/>
        <dbReference type="ChEBI" id="CHEBI:58274"/>
        <dbReference type="ChEBI" id="CHEBI:58349"/>
        <dbReference type="EC" id="1.2.1.41"/>
    </reaction>
</comment>
<comment type="pathway">
    <text evidence="1">Amino-acid biosynthesis; L-proline biosynthesis; L-glutamate 5-semialdehyde from L-glutamate: step 2/2.</text>
</comment>
<comment type="subcellular location">
    <subcellularLocation>
        <location evidence="1">Cytoplasm</location>
    </subcellularLocation>
</comment>
<comment type="similarity">
    <text evidence="1">Belongs to the gamma-glutamyl phosphate reductase family.</text>
</comment>
<reference key="1">
    <citation type="journal article" date="2010" name="J. Bacteriol.">
        <title>Complete genome sequence of the aerobic facultative methanotroph Methylocella silvestris BL2.</title>
        <authorList>
            <person name="Chen Y."/>
            <person name="Crombie A."/>
            <person name="Rahman M.T."/>
            <person name="Dedysh S.N."/>
            <person name="Liesack W."/>
            <person name="Stott M.B."/>
            <person name="Alam M."/>
            <person name="Theisen A.R."/>
            <person name="Murrell J.C."/>
            <person name="Dunfield P.F."/>
        </authorList>
    </citation>
    <scope>NUCLEOTIDE SEQUENCE [LARGE SCALE GENOMIC DNA]</scope>
    <source>
        <strain>DSM 15510 / CIP 108128 / LMG 27833 / NCIMB 13906 / BL2</strain>
    </source>
</reference>
<keyword id="KW-0028">Amino-acid biosynthesis</keyword>
<keyword id="KW-0963">Cytoplasm</keyword>
<keyword id="KW-0521">NADP</keyword>
<keyword id="KW-0560">Oxidoreductase</keyword>
<keyword id="KW-0641">Proline biosynthesis</keyword>
<keyword id="KW-1185">Reference proteome</keyword>